<dbReference type="EMBL" id="FM204883">
    <property type="protein sequence ID" value="CAW94344.1"/>
    <property type="molecule type" value="Genomic_DNA"/>
</dbReference>
<dbReference type="RefSeq" id="WP_012679766.1">
    <property type="nucleotide sequence ID" value="NC_012471.1"/>
</dbReference>
<dbReference type="SMR" id="C0MBD7"/>
<dbReference type="KEGG" id="seu:SEQ_1454"/>
<dbReference type="HOGENOM" id="CLU_009621_2_1_9"/>
<dbReference type="OrthoDB" id="9806651at2"/>
<dbReference type="Proteomes" id="UP000001365">
    <property type="component" value="Chromosome"/>
</dbReference>
<dbReference type="GO" id="GO:0005737">
    <property type="term" value="C:cytoplasm"/>
    <property type="evidence" value="ECO:0007669"/>
    <property type="project" value="UniProtKB-SubCell"/>
</dbReference>
<dbReference type="GO" id="GO:0009380">
    <property type="term" value="C:excinuclease repair complex"/>
    <property type="evidence" value="ECO:0007669"/>
    <property type="project" value="InterPro"/>
</dbReference>
<dbReference type="GO" id="GO:0005524">
    <property type="term" value="F:ATP binding"/>
    <property type="evidence" value="ECO:0007669"/>
    <property type="project" value="UniProtKB-UniRule"/>
</dbReference>
<dbReference type="GO" id="GO:0016887">
    <property type="term" value="F:ATP hydrolysis activity"/>
    <property type="evidence" value="ECO:0007669"/>
    <property type="project" value="InterPro"/>
</dbReference>
<dbReference type="GO" id="GO:0003677">
    <property type="term" value="F:DNA binding"/>
    <property type="evidence" value="ECO:0007669"/>
    <property type="project" value="UniProtKB-UniRule"/>
</dbReference>
<dbReference type="GO" id="GO:0009381">
    <property type="term" value="F:excinuclease ABC activity"/>
    <property type="evidence" value="ECO:0007669"/>
    <property type="project" value="UniProtKB-UniRule"/>
</dbReference>
<dbReference type="GO" id="GO:0004386">
    <property type="term" value="F:helicase activity"/>
    <property type="evidence" value="ECO:0007669"/>
    <property type="project" value="UniProtKB-KW"/>
</dbReference>
<dbReference type="GO" id="GO:0006289">
    <property type="term" value="P:nucleotide-excision repair"/>
    <property type="evidence" value="ECO:0007669"/>
    <property type="project" value="UniProtKB-UniRule"/>
</dbReference>
<dbReference type="GO" id="GO:0009432">
    <property type="term" value="P:SOS response"/>
    <property type="evidence" value="ECO:0007669"/>
    <property type="project" value="UniProtKB-UniRule"/>
</dbReference>
<dbReference type="CDD" id="cd17916">
    <property type="entry name" value="DEXHc_UvrB"/>
    <property type="match status" value="1"/>
</dbReference>
<dbReference type="CDD" id="cd18790">
    <property type="entry name" value="SF2_C_UvrB"/>
    <property type="match status" value="1"/>
</dbReference>
<dbReference type="Gene3D" id="3.40.50.300">
    <property type="entry name" value="P-loop containing nucleotide triphosphate hydrolases"/>
    <property type="match status" value="3"/>
</dbReference>
<dbReference type="Gene3D" id="4.10.860.10">
    <property type="entry name" value="UVR domain"/>
    <property type="match status" value="1"/>
</dbReference>
<dbReference type="HAMAP" id="MF_00204">
    <property type="entry name" value="UvrB"/>
    <property type="match status" value="1"/>
</dbReference>
<dbReference type="InterPro" id="IPR006935">
    <property type="entry name" value="Helicase/UvrB_N"/>
</dbReference>
<dbReference type="InterPro" id="IPR014001">
    <property type="entry name" value="Helicase_ATP-bd"/>
</dbReference>
<dbReference type="InterPro" id="IPR001650">
    <property type="entry name" value="Helicase_C-like"/>
</dbReference>
<dbReference type="InterPro" id="IPR027417">
    <property type="entry name" value="P-loop_NTPase"/>
</dbReference>
<dbReference type="InterPro" id="IPR001943">
    <property type="entry name" value="UVR_dom"/>
</dbReference>
<dbReference type="InterPro" id="IPR036876">
    <property type="entry name" value="UVR_dom_sf"/>
</dbReference>
<dbReference type="InterPro" id="IPR004807">
    <property type="entry name" value="UvrB"/>
</dbReference>
<dbReference type="InterPro" id="IPR041471">
    <property type="entry name" value="UvrB_inter"/>
</dbReference>
<dbReference type="InterPro" id="IPR024759">
    <property type="entry name" value="UvrB_YAD/RRR_dom"/>
</dbReference>
<dbReference type="NCBIfam" id="NF003673">
    <property type="entry name" value="PRK05298.1"/>
    <property type="match status" value="1"/>
</dbReference>
<dbReference type="NCBIfam" id="TIGR00631">
    <property type="entry name" value="uvrb"/>
    <property type="match status" value="1"/>
</dbReference>
<dbReference type="PANTHER" id="PTHR24029">
    <property type="entry name" value="UVRABC SYSTEM PROTEIN B"/>
    <property type="match status" value="1"/>
</dbReference>
<dbReference type="PANTHER" id="PTHR24029:SF0">
    <property type="entry name" value="UVRABC SYSTEM PROTEIN B"/>
    <property type="match status" value="1"/>
</dbReference>
<dbReference type="Pfam" id="PF00271">
    <property type="entry name" value="Helicase_C"/>
    <property type="match status" value="1"/>
</dbReference>
<dbReference type="Pfam" id="PF04851">
    <property type="entry name" value="ResIII"/>
    <property type="match status" value="1"/>
</dbReference>
<dbReference type="Pfam" id="PF02151">
    <property type="entry name" value="UVR"/>
    <property type="match status" value="1"/>
</dbReference>
<dbReference type="Pfam" id="PF12344">
    <property type="entry name" value="UvrB"/>
    <property type="match status" value="1"/>
</dbReference>
<dbReference type="Pfam" id="PF17757">
    <property type="entry name" value="UvrB_inter"/>
    <property type="match status" value="1"/>
</dbReference>
<dbReference type="SMART" id="SM00487">
    <property type="entry name" value="DEXDc"/>
    <property type="match status" value="1"/>
</dbReference>
<dbReference type="SMART" id="SM00490">
    <property type="entry name" value="HELICc"/>
    <property type="match status" value="1"/>
</dbReference>
<dbReference type="SUPFAM" id="SSF46600">
    <property type="entry name" value="C-terminal UvrC-binding domain of UvrB"/>
    <property type="match status" value="1"/>
</dbReference>
<dbReference type="SUPFAM" id="SSF52540">
    <property type="entry name" value="P-loop containing nucleoside triphosphate hydrolases"/>
    <property type="match status" value="2"/>
</dbReference>
<dbReference type="PROSITE" id="PS51192">
    <property type="entry name" value="HELICASE_ATP_BIND_1"/>
    <property type="match status" value="1"/>
</dbReference>
<dbReference type="PROSITE" id="PS51194">
    <property type="entry name" value="HELICASE_CTER"/>
    <property type="match status" value="1"/>
</dbReference>
<dbReference type="PROSITE" id="PS50151">
    <property type="entry name" value="UVR"/>
    <property type="match status" value="1"/>
</dbReference>
<proteinExistence type="inferred from homology"/>
<evidence type="ECO:0000255" key="1">
    <source>
        <dbReference type="HAMAP-Rule" id="MF_00204"/>
    </source>
</evidence>
<sequence>MIDKRDFKAFKLVSKYAPSGDQPQAIETLVDNIEGGEKAQILLGATGTGKTYTMSQVISKVNKPTLVVAHNKTLAGQLYGEFKEFFPENAVEYFVSYYDYYQPEAYVPSSDTYIEKDSSVNDEIDKLRHSATSSLLERNDVIVVASVSCIYGLGSPKEYADSAVSLRPGQEISRDQLLNALVDIQFERNDIDFQRGRFRVRGDVVEVFPASRDEHAFRIEFFGDEIDRIREIESLTGKVLGDADHLVLFPATHFVTNDEHMEQSISKIQAELADQLKLFEAEGKLLEAQRLRQRTEYDIEMLREMGYTNGVENYSRHMDGRSAGEPPYTLLDFFPDDFLIMIDESHMTMGQIKGMYNGDKARKQMLVDYGFRLPSALDNRPLRREEFESHVHQIVYVSATPGDYEMEQTDTIVEQIIRPTGLLDPEVEVRPSMGQMDDLLGEINLRVERGERTFITTLTKKMAEDLTDYLKEMGVKVKYMHSDIKTLERTEIIRDLRLGVFDVLIGINLLREGIDVPEVSLVAILDADKEGFLRNERGLIQTIGRAARNADGHVIMYADRMTDSMQRAIDETARRRAIQMAYNEEHGIIPQTIKKDIRDLISISRAVEAKATEAETNYESMTRSERQEAIKQLQKNMQEAAELLDFELAAQLRDLILELKAMD</sequence>
<gene>
    <name evidence="1" type="primary">uvrB</name>
    <name type="ordered locus">SEQ_1454</name>
</gene>
<feature type="chain" id="PRO_1000200552" description="UvrABC system protein B">
    <location>
        <begin position="1"/>
        <end position="663"/>
    </location>
</feature>
<feature type="domain" description="Helicase ATP-binding" evidence="1">
    <location>
        <begin position="31"/>
        <end position="271"/>
    </location>
</feature>
<feature type="domain" description="Helicase C-terminal" evidence="1">
    <location>
        <begin position="435"/>
        <end position="601"/>
    </location>
</feature>
<feature type="domain" description="UVR" evidence="1">
    <location>
        <begin position="627"/>
        <end position="662"/>
    </location>
</feature>
<feature type="short sequence motif" description="Beta-hairpin">
    <location>
        <begin position="97"/>
        <end position="120"/>
    </location>
</feature>
<feature type="binding site" evidence="1">
    <location>
        <begin position="44"/>
        <end position="51"/>
    </location>
    <ligand>
        <name>ATP</name>
        <dbReference type="ChEBI" id="CHEBI:30616"/>
    </ligand>
</feature>
<comment type="function">
    <text evidence="1">The UvrABC repair system catalyzes the recognition and processing of DNA lesions. A damage recognition complex composed of 2 UvrA and 2 UvrB subunits scans DNA for abnormalities. Upon binding of the UvrA(2)B(2) complex to a putative damaged site, the DNA wraps around one UvrB monomer. DNA wrap is dependent on ATP binding by UvrB and probably causes local melting of the DNA helix, facilitating insertion of UvrB beta-hairpin between the DNA strands. Then UvrB probes one DNA strand for the presence of a lesion. If a lesion is found the UvrA subunits dissociate and the UvrB-DNA preincision complex is formed. This complex is subsequently bound by UvrC and the second UvrB is released. If no lesion is found, the DNA wraps around the other UvrB subunit that will check the other stand for damage.</text>
</comment>
<comment type="subunit">
    <text evidence="1">Forms a heterotetramer with UvrA during the search for lesions. Interacts with UvrC in an incision complex.</text>
</comment>
<comment type="subcellular location">
    <subcellularLocation>
        <location evidence="1">Cytoplasm</location>
    </subcellularLocation>
</comment>
<comment type="domain">
    <text evidence="1">The beta-hairpin motif is involved in DNA binding.</text>
</comment>
<comment type="similarity">
    <text evidence="1">Belongs to the UvrB family.</text>
</comment>
<keyword id="KW-0067">ATP-binding</keyword>
<keyword id="KW-0963">Cytoplasm</keyword>
<keyword id="KW-0227">DNA damage</keyword>
<keyword id="KW-0228">DNA excision</keyword>
<keyword id="KW-0234">DNA repair</keyword>
<keyword id="KW-0267">Excision nuclease</keyword>
<keyword id="KW-0347">Helicase</keyword>
<keyword id="KW-0378">Hydrolase</keyword>
<keyword id="KW-0547">Nucleotide-binding</keyword>
<keyword id="KW-0742">SOS response</keyword>
<accession>C0MBD7</accession>
<protein>
    <recommendedName>
        <fullName evidence="1">UvrABC system protein B</fullName>
        <shortName evidence="1">Protein UvrB</shortName>
    </recommendedName>
    <alternativeName>
        <fullName evidence="1">Excinuclease ABC subunit B</fullName>
    </alternativeName>
</protein>
<name>UVRB_STRE4</name>
<reference key="1">
    <citation type="journal article" date="2009" name="PLoS Pathog.">
        <title>Genomic evidence for the evolution of Streptococcus equi: host restriction, increased virulence, and genetic exchange with human pathogens.</title>
        <authorList>
            <person name="Holden M.T.G."/>
            <person name="Heather Z."/>
            <person name="Paillot R."/>
            <person name="Steward K.F."/>
            <person name="Webb K."/>
            <person name="Ainslie F."/>
            <person name="Jourdan T."/>
            <person name="Bason N.C."/>
            <person name="Holroyd N.E."/>
            <person name="Mungall K."/>
            <person name="Quail M.A."/>
            <person name="Sanders M."/>
            <person name="Simmonds M."/>
            <person name="Willey D."/>
            <person name="Brooks K."/>
            <person name="Aanensen D.M."/>
            <person name="Spratt B.G."/>
            <person name="Jolley K.A."/>
            <person name="Maiden M.C.J."/>
            <person name="Kehoe M."/>
            <person name="Chanter N."/>
            <person name="Bentley S.D."/>
            <person name="Robinson C."/>
            <person name="Maskell D.J."/>
            <person name="Parkhill J."/>
            <person name="Waller A.S."/>
        </authorList>
    </citation>
    <scope>NUCLEOTIDE SEQUENCE [LARGE SCALE GENOMIC DNA]</scope>
    <source>
        <strain>4047</strain>
    </source>
</reference>
<organism>
    <name type="scientific">Streptococcus equi subsp. equi (strain 4047)</name>
    <dbReference type="NCBI Taxonomy" id="553482"/>
    <lineage>
        <taxon>Bacteria</taxon>
        <taxon>Bacillati</taxon>
        <taxon>Bacillota</taxon>
        <taxon>Bacilli</taxon>
        <taxon>Lactobacillales</taxon>
        <taxon>Streptococcaceae</taxon>
        <taxon>Streptococcus</taxon>
    </lineage>
</organism>